<proteinExistence type="inferred from homology"/>
<organism>
    <name type="scientific">Staphylococcus aureus (strain MSSA476)</name>
    <dbReference type="NCBI Taxonomy" id="282459"/>
    <lineage>
        <taxon>Bacteria</taxon>
        <taxon>Bacillati</taxon>
        <taxon>Bacillota</taxon>
        <taxon>Bacilli</taxon>
        <taxon>Bacillales</taxon>
        <taxon>Staphylococcaceae</taxon>
        <taxon>Staphylococcus</taxon>
    </lineage>
</organism>
<reference key="1">
    <citation type="journal article" date="2004" name="Proc. Natl. Acad. Sci. U.S.A.">
        <title>Complete genomes of two clinical Staphylococcus aureus strains: evidence for the rapid evolution of virulence and drug resistance.</title>
        <authorList>
            <person name="Holden M.T.G."/>
            <person name="Feil E.J."/>
            <person name="Lindsay J.A."/>
            <person name="Peacock S.J."/>
            <person name="Day N.P.J."/>
            <person name="Enright M.C."/>
            <person name="Foster T.J."/>
            <person name="Moore C.E."/>
            <person name="Hurst L."/>
            <person name="Atkin R."/>
            <person name="Barron A."/>
            <person name="Bason N."/>
            <person name="Bentley S.D."/>
            <person name="Chillingworth C."/>
            <person name="Chillingworth T."/>
            <person name="Churcher C."/>
            <person name="Clark L."/>
            <person name="Corton C."/>
            <person name="Cronin A."/>
            <person name="Doggett J."/>
            <person name="Dowd L."/>
            <person name="Feltwell T."/>
            <person name="Hance Z."/>
            <person name="Harris B."/>
            <person name="Hauser H."/>
            <person name="Holroyd S."/>
            <person name="Jagels K."/>
            <person name="James K.D."/>
            <person name="Lennard N."/>
            <person name="Line A."/>
            <person name="Mayes R."/>
            <person name="Moule S."/>
            <person name="Mungall K."/>
            <person name="Ormond D."/>
            <person name="Quail M.A."/>
            <person name="Rabbinowitsch E."/>
            <person name="Rutherford K.M."/>
            <person name="Sanders M."/>
            <person name="Sharp S."/>
            <person name="Simmonds M."/>
            <person name="Stevens K."/>
            <person name="Whitehead S."/>
            <person name="Barrell B.G."/>
            <person name="Spratt B.G."/>
            <person name="Parkhill J."/>
        </authorList>
    </citation>
    <scope>NUCLEOTIDE SEQUENCE [LARGE SCALE GENOMIC DNA]</scope>
    <source>
        <strain>MSSA476</strain>
    </source>
</reference>
<feature type="signal peptide" evidence="2">
    <location>
        <begin position="1"/>
        <end position="29"/>
    </location>
</feature>
<feature type="propeptide" id="PRO_0000026892" evidence="1">
    <location>
        <begin position="30"/>
        <end position="68"/>
    </location>
</feature>
<feature type="chain" id="PRO_0000026893" description="Glutamyl endopeptidase">
    <location>
        <begin position="69"/>
        <end position="333"/>
    </location>
</feature>
<feature type="repeat" description="1">
    <location>
        <begin position="289"/>
        <end position="291"/>
    </location>
</feature>
<feature type="repeat" description="2">
    <location>
        <begin position="292"/>
        <end position="294"/>
    </location>
</feature>
<feature type="repeat" description="3">
    <location>
        <begin position="295"/>
        <end position="297"/>
    </location>
</feature>
<feature type="repeat" description="4">
    <location>
        <begin position="298"/>
        <end position="300"/>
    </location>
</feature>
<feature type="repeat" description="5">
    <location>
        <begin position="301"/>
        <end position="303"/>
    </location>
</feature>
<feature type="repeat" description="6">
    <location>
        <begin position="304"/>
        <end position="306"/>
    </location>
</feature>
<feature type="repeat" description="7">
    <location>
        <begin position="307"/>
        <end position="309"/>
    </location>
</feature>
<feature type="repeat" description="8">
    <location>
        <begin position="310"/>
        <end position="312"/>
    </location>
</feature>
<feature type="repeat" description="9">
    <location>
        <begin position="313"/>
        <end position="315"/>
    </location>
</feature>
<feature type="repeat" description="10">
    <location>
        <begin position="316"/>
        <end position="318"/>
    </location>
</feature>
<feature type="repeat" description="11">
    <location>
        <begin position="319"/>
        <end position="321"/>
    </location>
</feature>
<feature type="region of interest" description="Disordered" evidence="4">
    <location>
        <begin position="33"/>
        <end position="61"/>
    </location>
</feature>
<feature type="region of interest" description="Disordered" evidence="4">
    <location>
        <begin position="283"/>
        <end position="333"/>
    </location>
</feature>
<feature type="region of interest" description="11 X 3 AA repeats of P-[DN]-N">
    <location>
        <begin position="289"/>
        <end position="321"/>
    </location>
</feature>
<feature type="compositionally biased region" description="Low complexity" evidence="4">
    <location>
        <begin position="40"/>
        <end position="54"/>
    </location>
</feature>
<feature type="compositionally biased region" description="Low complexity" evidence="4">
    <location>
        <begin position="286"/>
        <end position="333"/>
    </location>
</feature>
<feature type="active site" description="Charge relay system" evidence="3">
    <location>
        <position position="119"/>
    </location>
</feature>
<feature type="active site" description="Charge relay system" evidence="3">
    <location>
        <position position="161"/>
    </location>
</feature>
<feature type="active site" description="Charge relay system" evidence="3">
    <location>
        <position position="237"/>
    </location>
</feature>
<feature type="site" description="Cleavage; by aureolysin" evidence="1">
    <location>
        <begin position="68"/>
        <end position="69"/>
    </location>
</feature>
<sequence length="333" mass="35970">MKGKFLKVSSLFVATLTTATLVSSPAANALSSKAMDNHPQQSQSSKQQTPKIQKGGNLKPLEQREHANVILPNNDRHQITDTTNGHYAPVTYIQVEAPTGTFIASGVVVGKDTLLTNKHVVDATHGDPHALKAFPSAINQDNYPNGGFTAEQITKYSGEGDLAIVKFSPNEQNKHIGEVVKPATMSNNAETQVNQNITVTGYPGDKPVATMWESKGKITYLKGEAMQYDLSTTGGNSGSPVFNEKNEVIGIHWGGVPNEFNGAVFINENVRNFLKQNIEDIHFANDDQPNNPDNPDNPNNPDNPNNPDNPNNPNNPDNPDNGDNNNSDNPDAA</sequence>
<name>SSPA_STAAS</name>
<comment type="function">
    <text evidence="1">Preferentially cleaves peptide bonds on the carboxyl-terminal side of aspartate and glutamate. Along with other extracellular proteases it is involved in colonization and infection of human tissues. Required for proteolytic maturation of thiol protease SspB and inactivation of SspC, an inhibitor of SspB. It is the most important protease for degradation of fibronectin-binding protein (FnBP) and surface protein A, which are involved in adherence to host cells. May also protect bacteria against host defense mechanism by cleaving the immunoglobulin classes IgG, IgA and IgM. May be involved in the stability of secreted lipases (By similarity).</text>
</comment>
<comment type="catalytic activity">
    <reaction evidence="3">
        <text>Preferential cleavage: Glu-|-Xaa, Asp-|-Xaa.</text>
        <dbReference type="EC" id="3.4.21.19"/>
    </reaction>
</comment>
<comment type="subcellular location">
    <subcellularLocation>
        <location evidence="1">Secreted</location>
    </subcellularLocation>
</comment>
<comment type="PTM">
    <text evidence="1">Proteolytically cleaved by aureolysin (aur). This cleavage leads to the activation of SspA (By similarity).</text>
</comment>
<comment type="miscellaneous">
    <text evidence="1">The cascade of activation of extracellular proteases proceeds from the metalloprotease aureolysin (aur), through SspA to SspB.</text>
</comment>
<comment type="similarity">
    <text evidence="5">Belongs to the peptidase S1B family.</text>
</comment>
<evidence type="ECO:0000250" key="1"/>
<evidence type="ECO:0000255" key="2"/>
<evidence type="ECO:0000255" key="3">
    <source>
        <dbReference type="PROSITE-ProRule" id="PRU10083"/>
    </source>
</evidence>
<evidence type="ECO:0000256" key="4">
    <source>
        <dbReference type="SAM" id="MobiDB-lite"/>
    </source>
</evidence>
<evidence type="ECO:0000305" key="5"/>
<protein>
    <recommendedName>
        <fullName>Glutamyl endopeptidase</fullName>
        <ecNumber>3.4.21.19</ecNumber>
    </recommendedName>
    <alternativeName>
        <fullName>Endoproteinase Glu-C</fullName>
    </alternativeName>
    <alternativeName>
        <fullName>Staphylococcal serine proteinase</fullName>
    </alternativeName>
    <alternativeName>
        <fullName>V8 protease</fullName>
    </alternativeName>
    <alternativeName>
        <fullName>V8 proteinase</fullName>
    </alternativeName>
</protein>
<accession>Q6GAG4</accession>
<dbReference type="EC" id="3.4.21.19"/>
<dbReference type="EMBL" id="BX571857">
    <property type="protein sequence ID" value="CAG42759.1"/>
    <property type="molecule type" value="Genomic_DNA"/>
</dbReference>
<dbReference type="RefSeq" id="WP_000676532.1">
    <property type="nucleotide sequence ID" value="NC_002953.3"/>
</dbReference>
<dbReference type="SMR" id="Q6GAG4"/>
<dbReference type="MEROPS" id="S01.269"/>
<dbReference type="KEGG" id="sas:SAS0984"/>
<dbReference type="HOGENOM" id="CLU_073589_1_0_9"/>
<dbReference type="PRO" id="PR:Q6GAG4"/>
<dbReference type="GO" id="GO:0005576">
    <property type="term" value="C:extracellular region"/>
    <property type="evidence" value="ECO:0007669"/>
    <property type="project" value="UniProtKB-SubCell"/>
</dbReference>
<dbReference type="GO" id="GO:0004252">
    <property type="term" value="F:serine-type endopeptidase activity"/>
    <property type="evidence" value="ECO:0007669"/>
    <property type="project" value="InterPro"/>
</dbReference>
<dbReference type="GO" id="GO:0006508">
    <property type="term" value="P:proteolysis"/>
    <property type="evidence" value="ECO:0007669"/>
    <property type="project" value="UniProtKB-KW"/>
</dbReference>
<dbReference type="Gene3D" id="2.40.10.10">
    <property type="entry name" value="Trypsin-like serine proteases"/>
    <property type="match status" value="2"/>
</dbReference>
<dbReference type="InterPro" id="IPR050966">
    <property type="entry name" value="Glutamyl_endopeptidase"/>
</dbReference>
<dbReference type="InterPro" id="IPR009003">
    <property type="entry name" value="Peptidase_S1_PA"/>
</dbReference>
<dbReference type="InterPro" id="IPR043504">
    <property type="entry name" value="Peptidase_S1_PA_chymotrypsin"/>
</dbReference>
<dbReference type="InterPro" id="IPR008256">
    <property type="entry name" value="Peptidase_S1B"/>
</dbReference>
<dbReference type="InterPro" id="IPR008353">
    <property type="entry name" value="Peptidase_S1B_tx"/>
</dbReference>
<dbReference type="InterPro" id="IPR028301">
    <property type="entry name" value="V8_his_AS"/>
</dbReference>
<dbReference type="InterPro" id="IPR000126">
    <property type="entry name" value="V8_ser_AS"/>
</dbReference>
<dbReference type="PANTHER" id="PTHR15462">
    <property type="entry name" value="SERINE PROTEASE"/>
    <property type="match status" value="1"/>
</dbReference>
<dbReference type="PANTHER" id="PTHR15462:SF8">
    <property type="entry name" value="SERINE PROTEASE"/>
    <property type="match status" value="1"/>
</dbReference>
<dbReference type="Pfam" id="PF13365">
    <property type="entry name" value="Trypsin_2"/>
    <property type="match status" value="1"/>
</dbReference>
<dbReference type="PRINTS" id="PR01774">
    <property type="entry name" value="EXFOLTOXIN"/>
</dbReference>
<dbReference type="PRINTS" id="PR00839">
    <property type="entry name" value="V8PROTEASE"/>
</dbReference>
<dbReference type="SUPFAM" id="SSF50494">
    <property type="entry name" value="Trypsin-like serine proteases"/>
    <property type="match status" value="1"/>
</dbReference>
<dbReference type="PROSITE" id="PS00672">
    <property type="entry name" value="V8_HIS"/>
    <property type="match status" value="1"/>
</dbReference>
<dbReference type="PROSITE" id="PS00673">
    <property type="entry name" value="V8_SER"/>
    <property type="match status" value="1"/>
</dbReference>
<gene>
    <name type="primary">sspA</name>
    <name type="ordered locus">SAS0984</name>
</gene>
<keyword id="KW-0378">Hydrolase</keyword>
<keyword id="KW-0645">Protease</keyword>
<keyword id="KW-0677">Repeat</keyword>
<keyword id="KW-0964">Secreted</keyword>
<keyword id="KW-0720">Serine protease</keyword>
<keyword id="KW-0732">Signal</keyword>
<keyword id="KW-0843">Virulence</keyword>
<keyword id="KW-0865">Zymogen</keyword>